<proteinExistence type="inferred from homology"/>
<accession>Q66D90</accession>
<organism>
    <name type="scientific">Yersinia pseudotuberculosis serotype I (strain IP32953)</name>
    <dbReference type="NCBI Taxonomy" id="273123"/>
    <lineage>
        <taxon>Bacteria</taxon>
        <taxon>Pseudomonadati</taxon>
        <taxon>Pseudomonadota</taxon>
        <taxon>Gammaproteobacteria</taxon>
        <taxon>Enterobacterales</taxon>
        <taxon>Yersiniaceae</taxon>
        <taxon>Yersinia</taxon>
    </lineage>
</organism>
<evidence type="ECO:0000255" key="1">
    <source>
        <dbReference type="HAMAP-Rule" id="MF_00671"/>
    </source>
</evidence>
<feature type="signal peptide" evidence="1">
    <location>
        <begin position="1"/>
        <end position="21"/>
    </location>
</feature>
<feature type="chain" id="PRO_0000034703" description="Tol-Pal system protein TolB" evidence="1">
    <location>
        <begin position="22"/>
        <end position="430"/>
    </location>
</feature>
<gene>
    <name evidence="1" type="primary">tolB</name>
    <name type="ordered locus">YPTB1159</name>
</gene>
<name>TOLB_YERPS</name>
<sequence length="430" mass="46045">MKQAFRVALGFLVLWASVLHAEVRIEITQGVDSARPIGVVPFKWMGPGTPPEEIGAIVGADLRNSGKFNPIDAARMPQQPSTAAEVTPAAWTALGIDAVVVGQVQPSADGSYVVSYQLVDTSGSAGSILAQNQYKVTKQWLRYSAHTVSDEVFEKLTGIKGAFRTRIAYVVKTNGGKFPHELRVSDYDGYNQFVVHRSPEPLMSPAWSPDGSKIAYVTFESGKSALVIQTLANGAIRQVASFPRHNGAPAFSPDGTKLAFALSKSGSLNLYVMDLASGQISQVTDGRSNNTEPSWFPDSQNLAYTSDQGGRPQVYKVNINGGVPQRITWEGSQNQNADVSPDGKFLVLVSSNGGAQHIAKQDLETGAVQVLTDTLLDETPSIAPNGTMVIYSSTQGLGSVLQLVSTDGRFKARLPATDGQVKFPAWSPYL</sequence>
<reference key="1">
    <citation type="journal article" date="2004" name="Proc. Natl. Acad. Sci. U.S.A.">
        <title>Insights into the evolution of Yersinia pestis through whole-genome comparison with Yersinia pseudotuberculosis.</title>
        <authorList>
            <person name="Chain P.S.G."/>
            <person name="Carniel E."/>
            <person name="Larimer F.W."/>
            <person name="Lamerdin J."/>
            <person name="Stoutland P.O."/>
            <person name="Regala W.M."/>
            <person name="Georgescu A.M."/>
            <person name="Vergez L.M."/>
            <person name="Land M.L."/>
            <person name="Motin V.L."/>
            <person name="Brubaker R.R."/>
            <person name="Fowler J."/>
            <person name="Hinnebusch J."/>
            <person name="Marceau M."/>
            <person name="Medigue C."/>
            <person name="Simonet M."/>
            <person name="Chenal-Francisque V."/>
            <person name="Souza B."/>
            <person name="Dacheux D."/>
            <person name="Elliott J.M."/>
            <person name="Derbise A."/>
            <person name="Hauser L.J."/>
            <person name="Garcia E."/>
        </authorList>
    </citation>
    <scope>NUCLEOTIDE SEQUENCE [LARGE SCALE GENOMIC DNA]</scope>
    <source>
        <strain>IP32953</strain>
    </source>
</reference>
<protein>
    <recommendedName>
        <fullName evidence="1">Tol-Pal system protein TolB</fullName>
    </recommendedName>
</protein>
<dbReference type="EMBL" id="BX936398">
    <property type="protein sequence ID" value="CAH20399.1"/>
    <property type="molecule type" value="Genomic_DNA"/>
</dbReference>
<dbReference type="RefSeq" id="WP_002210738.1">
    <property type="nucleotide sequence ID" value="NZ_CP009712.1"/>
</dbReference>
<dbReference type="SMR" id="Q66D90"/>
<dbReference type="GeneID" id="57977261"/>
<dbReference type="KEGG" id="ypo:BZ17_1378"/>
<dbReference type="KEGG" id="yps:YPTB1159"/>
<dbReference type="PATRIC" id="fig|273123.14.peg.1463"/>
<dbReference type="Proteomes" id="UP000001011">
    <property type="component" value="Chromosome"/>
</dbReference>
<dbReference type="GO" id="GO:0042597">
    <property type="term" value="C:periplasmic space"/>
    <property type="evidence" value="ECO:0007669"/>
    <property type="project" value="UniProtKB-SubCell"/>
</dbReference>
<dbReference type="GO" id="GO:0051301">
    <property type="term" value="P:cell division"/>
    <property type="evidence" value="ECO:0007669"/>
    <property type="project" value="UniProtKB-UniRule"/>
</dbReference>
<dbReference type="GO" id="GO:0017038">
    <property type="term" value="P:protein import"/>
    <property type="evidence" value="ECO:0007669"/>
    <property type="project" value="InterPro"/>
</dbReference>
<dbReference type="FunFam" id="2.120.10.30:FF:000022">
    <property type="entry name" value="Tol-Pal system protein TolB"/>
    <property type="match status" value="1"/>
</dbReference>
<dbReference type="Gene3D" id="2.120.10.30">
    <property type="entry name" value="TolB, C-terminal domain"/>
    <property type="match status" value="1"/>
</dbReference>
<dbReference type="Gene3D" id="3.40.50.10070">
    <property type="entry name" value="TolB, N-terminal domain"/>
    <property type="match status" value="1"/>
</dbReference>
<dbReference type="HAMAP" id="MF_00671">
    <property type="entry name" value="TolB"/>
    <property type="match status" value="1"/>
</dbReference>
<dbReference type="InterPro" id="IPR011042">
    <property type="entry name" value="6-blade_b-propeller_TolB-like"/>
</dbReference>
<dbReference type="InterPro" id="IPR011659">
    <property type="entry name" value="PD40"/>
</dbReference>
<dbReference type="InterPro" id="IPR014167">
    <property type="entry name" value="Tol-Pal_TolB"/>
</dbReference>
<dbReference type="InterPro" id="IPR007195">
    <property type="entry name" value="TolB_N"/>
</dbReference>
<dbReference type="NCBIfam" id="TIGR02800">
    <property type="entry name" value="propeller_TolB"/>
    <property type="match status" value="1"/>
</dbReference>
<dbReference type="PANTHER" id="PTHR36842:SF1">
    <property type="entry name" value="PROTEIN TOLB"/>
    <property type="match status" value="1"/>
</dbReference>
<dbReference type="PANTHER" id="PTHR36842">
    <property type="entry name" value="PROTEIN TOLB HOMOLOG"/>
    <property type="match status" value="1"/>
</dbReference>
<dbReference type="Pfam" id="PF07676">
    <property type="entry name" value="PD40"/>
    <property type="match status" value="4"/>
</dbReference>
<dbReference type="Pfam" id="PF04052">
    <property type="entry name" value="TolB_N"/>
    <property type="match status" value="1"/>
</dbReference>
<dbReference type="SUPFAM" id="SSF52964">
    <property type="entry name" value="TolB, N-terminal domain"/>
    <property type="match status" value="1"/>
</dbReference>
<dbReference type="SUPFAM" id="SSF69304">
    <property type="entry name" value="Tricorn protease N-terminal domain"/>
    <property type="match status" value="1"/>
</dbReference>
<keyword id="KW-0131">Cell cycle</keyword>
<keyword id="KW-0132">Cell division</keyword>
<keyword id="KW-0574">Periplasm</keyword>
<keyword id="KW-0732">Signal</keyword>
<comment type="function">
    <text evidence="1">Part of the Tol-Pal system, which plays a role in outer membrane invagination during cell division and is important for maintaining outer membrane integrity. TolB occupies a key intermediary position in the Tol-Pal system because it communicates directly with both membrane-embedded components, Pal in the outer membrane and TolA in the inner membrane.</text>
</comment>
<comment type="subunit">
    <text evidence="1">The Tol-Pal system is composed of five core proteins: the inner membrane proteins TolA, TolQ and TolR, the periplasmic protein TolB and the outer membrane protein Pal. They form a network linking the inner and outer membranes and the peptidoglycan layer.</text>
</comment>
<comment type="subcellular location">
    <subcellularLocation>
        <location evidence="1">Periplasm</location>
    </subcellularLocation>
</comment>
<comment type="similarity">
    <text evidence="1">Belongs to the TolB family.</text>
</comment>